<protein>
    <recommendedName>
        <fullName>2-oxo-4-hydroxy-4-carboxy-5-ureidoimidazoline decarboxylase</fullName>
        <shortName>OHCU decarboxylase</shortName>
        <ecNumber evidence="2">4.1.1.97</ecNumber>
    </recommendedName>
    <alternativeName>
        <fullName>Parahox neighbor</fullName>
    </alternativeName>
    <alternativeName>
        <fullName>Ureidoimidazoline (2-oxo-4-hydroxy-4-carboxy-5-) decarboxylase</fullName>
    </alternativeName>
</protein>
<dbReference type="EC" id="4.1.1.97" evidence="2"/>
<dbReference type="EMBL" id="DQ225767">
    <property type="protein sequence ID" value="ABB46374.1"/>
    <property type="molecule type" value="mRNA"/>
</dbReference>
<dbReference type="EMBL" id="BC152959">
    <property type="protein sequence ID" value="AAI52960.1"/>
    <property type="molecule type" value="mRNA"/>
</dbReference>
<dbReference type="CCDS" id="CCDS39399.1"/>
<dbReference type="RefSeq" id="NP_001034767.1">
    <property type="nucleotide sequence ID" value="NM_001039678.2"/>
</dbReference>
<dbReference type="SMR" id="Q283N4"/>
<dbReference type="FunCoup" id="Q283N4">
    <property type="interactions" value="148"/>
</dbReference>
<dbReference type="STRING" id="10090.ENSMUSP00000098000"/>
<dbReference type="iPTMnet" id="Q283N4"/>
<dbReference type="PhosphoSitePlus" id="Q283N4"/>
<dbReference type="SwissPalm" id="Q283N4"/>
<dbReference type="jPOST" id="Q283N4"/>
<dbReference type="PaxDb" id="10090-ENSMUSP00000098000"/>
<dbReference type="ProteomicsDB" id="298255"/>
<dbReference type="DNASU" id="231903"/>
<dbReference type="Ensembl" id="ENSMUST00000100433.5">
    <property type="protein sequence ID" value="ENSMUSP00000098000.4"/>
    <property type="gene ID" value="ENSMUSG00000075543.5"/>
</dbReference>
<dbReference type="GeneID" id="231903"/>
<dbReference type="KEGG" id="mmu:231903"/>
<dbReference type="UCSC" id="uc009aoa.2">
    <property type="organism name" value="mouse"/>
</dbReference>
<dbReference type="AGR" id="MGI:3647519"/>
<dbReference type="CTD" id="646625"/>
<dbReference type="MGI" id="MGI:3647519">
    <property type="gene designation" value="Urad"/>
</dbReference>
<dbReference type="VEuPathDB" id="HostDB:ENSMUSG00000075543"/>
<dbReference type="eggNOG" id="KOG0848">
    <property type="taxonomic scope" value="Eukaryota"/>
</dbReference>
<dbReference type="GeneTree" id="ENSGT00390000002395"/>
<dbReference type="HOGENOM" id="CLU_092522_1_0_1"/>
<dbReference type="InParanoid" id="Q283N4"/>
<dbReference type="OMA" id="RCQNERA"/>
<dbReference type="OrthoDB" id="9970124at2759"/>
<dbReference type="PhylomeDB" id="Q283N4"/>
<dbReference type="TreeFam" id="TF323276"/>
<dbReference type="UniPathway" id="UPA00394">
    <property type="reaction ID" value="UER00652"/>
</dbReference>
<dbReference type="BioGRID-ORCS" id="231903">
    <property type="hits" value="3 hits in 76 CRISPR screens"/>
</dbReference>
<dbReference type="PRO" id="PR:Q283N4"/>
<dbReference type="Proteomes" id="UP000000589">
    <property type="component" value="Chromosome 5"/>
</dbReference>
<dbReference type="RNAct" id="Q283N4">
    <property type="molecule type" value="protein"/>
</dbReference>
<dbReference type="Bgee" id="ENSMUSG00000075543">
    <property type="expression patterns" value="Expressed in embryonic cell in blastocyst and 14 other cell types or tissues"/>
</dbReference>
<dbReference type="ExpressionAtlas" id="Q283N4">
    <property type="expression patterns" value="baseline and differential"/>
</dbReference>
<dbReference type="GO" id="GO:0005777">
    <property type="term" value="C:peroxisome"/>
    <property type="evidence" value="ECO:0000314"/>
    <property type="project" value="MGI"/>
</dbReference>
<dbReference type="GO" id="GO:0051997">
    <property type="term" value="F:2-oxo-4-hydroxy-4-carboxy-5-ureidoimidazoline decarboxylase activity"/>
    <property type="evidence" value="ECO:0000314"/>
    <property type="project" value="MGI"/>
</dbReference>
<dbReference type="GO" id="GO:0016831">
    <property type="term" value="F:carboxy-lyase activity"/>
    <property type="evidence" value="ECO:0000314"/>
    <property type="project" value="MGI"/>
</dbReference>
<dbReference type="GO" id="GO:0006154">
    <property type="term" value="P:adenosine catabolic process"/>
    <property type="evidence" value="ECO:0000314"/>
    <property type="project" value="MGI"/>
</dbReference>
<dbReference type="GO" id="GO:0000255">
    <property type="term" value="P:allantoin metabolic process"/>
    <property type="evidence" value="ECO:0000314"/>
    <property type="project" value="MGI"/>
</dbReference>
<dbReference type="GO" id="GO:0043605">
    <property type="term" value="P:amide catabolic process"/>
    <property type="evidence" value="ECO:0000314"/>
    <property type="project" value="MGI"/>
</dbReference>
<dbReference type="GO" id="GO:0006196">
    <property type="term" value="P:AMP catabolic process"/>
    <property type="evidence" value="ECO:0000314"/>
    <property type="project" value="MGI"/>
</dbReference>
<dbReference type="GO" id="GO:0046059">
    <property type="term" value="P:dAMP catabolic process"/>
    <property type="evidence" value="ECO:0000314"/>
    <property type="project" value="MGI"/>
</dbReference>
<dbReference type="GO" id="GO:0006157">
    <property type="term" value="P:deoxyadenosine catabolic process"/>
    <property type="evidence" value="ECO:0000314"/>
    <property type="project" value="MGI"/>
</dbReference>
<dbReference type="GO" id="GO:0006161">
    <property type="term" value="P:deoxyguanosine catabolic process"/>
    <property type="evidence" value="ECO:0000314"/>
    <property type="project" value="MGI"/>
</dbReference>
<dbReference type="GO" id="GO:0006149">
    <property type="term" value="P:deoxyinosine catabolic process"/>
    <property type="evidence" value="ECO:0000314"/>
    <property type="project" value="MGI"/>
</dbReference>
<dbReference type="GO" id="GO:0046055">
    <property type="term" value="P:dGMP catabolic process"/>
    <property type="evidence" value="ECO:0000314"/>
    <property type="project" value="MGI"/>
</dbReference>
<dbReference type="GO" id="GO:0046038">
    <property type="term" value="P:GMP catabolic process"/>
    <property type="evidence" value="ECO:0000314"/>
    <property type="project" value="MGI"/>
</dbReference>
<dbReference type="GO" id="GO:0006147">
    <property type="term" value="P:guanine catabolic process"/>
    <property type="evidence" value="ECO:0000314"/>
    <property type="project" value="MGI"/>
</dbReference>
<dbReference type="GO" id="GO:0009114">
    <property type="term" value="P:hypoxanthine catabolic process"/>
    <property type="evidence" value="ECO:0000314"/>
    <property type="project" value="MGI"/>
</dbReference>
<dbReference type="GO" id="GO:0006204">
    <property type="term" value="P:IMP catabolic process"/>
    <property type="evidence" value="ECO:0000314"/>
    <property type="project" value="MGI"/>
</dbReference>
<dbReference type="GO" id="GO:0006148">
    <property type="term" value="P:inosine catabolic process"/>
    <property type="evidence" value="ECO:0000314"/>
    <property type="project" value="MGI"/>
</dbReference>
<dbReference type="GO" id="GO:0019628">
    <property type="term" value="P:urate catabolic process"/>
    <property type="evidence" value="ECO:0000314"/>
    <property type="project" value="MGI"/>
</dbReference>
<dbReference type="GO" id="GO:0009115">
    <property type="term" value="P:xanthine catabolic process"/>
    <property type="evidence" value="ECO:0000314"/>
    <property type="project" value="MGI"/>
</dbReference>
<dbReference type="FunFam" id="1.10.3330.10:FF:000001">
    <property type="entry name" value="2-oxo-4-hydroxy-4-carboxy-5-ureidoimidazoline decarboxylase"/>
    <property type="match status" value="1"/>
</dbReference>
<dbReference type="Gene3D" id="1.10.3330.10">
    <property type="entry name" value="Oxo-4-hydroxy-4-carboxy-5-ureidoimidazoline decarboxylase"/>
    <property type="match status" value="1"/>
</dbReference>
<dbReference type="InterPro" id="IPR018020">
    <property type="entry name" value="OHCU_decarboxylase"/>
</dbReference>
<dbReference type="InterPro" id="IPR017580">
    <property type="entry name" value="OHCU_decarboxylase-1"/>
</dbReference>
<dbReference type="InterPro" id="IPR036778">
    <property type="entry name" value="OHCU_decarboxylase_sf"/>
</dbReference>
<dbReference type="NCBIfam" id="TIGR03164">
    <property type="entry name" value="UHCUDC"/>
    <property type="match status" value="1"/>
</dbReference>
<dbReference type="PANTHER" id="PTHR43466">
    <property type="entry name" value="2-OXO-4-HYDROXY-4-CARBOXY-5-UREIDOIMIDAZOLINE DECARBOXYLASE-RELATED"/>
    <property type="match status" value="1"/>
</dbReference>
<dbReference type="PANTHER" id="PTHR43466:SF1">
    <property type="entry name" value="2-OXO-4-HYDROXY-4-CARBOXY-5-UREIDOIMIDAZOLINE DECARBOXYLASE-RELATED"/>
    <property type="match status" value="1"/>
</dbReference>
<dbReference type="Pfam" id="PF09349">
    <property type="entry name" value="OHCU_decarbox"/>
    <property type="match status" value="1"/>
</dbReference>
<dbReference type="SUPFAM" id="SSF158694">
    <property type="entry name" value="UraD-Like"/>
    <property type="match status" value="1"/>
</dbReference>
<name>URAD_MOUSE</name>
<sequence length="178" mass="20017">MDMVKVNSMDFGEFVDVFGNIVEKCPLIAAAVWSQRPFSGLEDLENHFFAFIDALPRSGQEGILRCHPDLAGRDLQQGTLTAESQREQSQAGLTSLDTDDRLRLQQLNAQYRERFGFPFVLAARLSDRATVPRELARRLQCQPESELRTALGEVKKISHLRLTDLLGAHSHSARVELP</sequence>
<evidence type="ECO:0000250" key="1"/>
<evidence type="ECO:0000269" key="2">
    <source>
    </source>
</evidence>
<evidence type="ECO:0000305" key="3"/>
<comment type="function">
    <text evidence="2">Catalyzes the stereoselective decarboxylation of 2-oxo-4-hydroxy-4-carboxy-5-ureidoimidazoline (OHCU) to (S)-allantoin.</text>
</comment>
<comment type="catalytic activity">
    <reaction evidence="2">
        <text>5-hydroxy-2-oxo-4-ureido-2,5-dihydro-1H-imidazole-5-carboxylate + H(+) = (S)-allantoin + CO2</text>
        <dbReference type="Rhea" id="RHEA:26301"/>
        <dbReference type="ChEBI" id="CHEBI:15378"/>
        <dbReference type="ChEBI" id="CHEBI:15678"/>
        <dbReference type="ChEBI" id="CHEBI:16526"/>
        <dbReference type="ChEBI" id="CHEBI:58639"/>
        <dbReference type="EC" id="4.1.1.97"/>
    </reaction>
</comment>
<comment type="pathway">
    <text>Purine metabolism; urate degradation; (S)-allantoin from urate: step 3/3.</text>
</comment>
<comment type="subcellular location">
    <subcellularLocation>
        <location evidence="3">Peroxisome</location>
    </subcellularLocation>
</comment>
<comment type="similarity">
    <text evidence="3">Belongs to the OHCU decarboxylase family.</text>
</comment>
<reference key="1">
    <citation type="journal article" date="2006" name="Nat. Chem. Biol.">
        <title>Completing the uric acid degradation pathway through phylogenetic comparison of whole genomes.</title>
        <authorList>
            <person name="Ramazzina I."/>
            <person name="Folli C."/>
            <person name="Secchi A."/>
            <person name="Berni R."/>
            <person name="Percudani R."/>
        </authorList>
    </citation>
    <scope>NUCLEOTIDE SEQUENCE [MRNA]</scope>
    <scope>FUNCTION</scope>
    <scope>CATALYTIC ACTIVITY</scope>
</reference>
<reference key="2">
    <citation type="journal article" date="2004" name="Genome Res.">
        <title>The status, quality, and expansion of the NIH full-length cDNA project: the Mammalian Gene Collection (MGC).</title>
        <authorList>
            <consortium name="The MGC Project Team"/>
        </authorList>
    </citation>
    <scope>NUCLEOTIDE SEQUENCE [LARGE SCALE MRNA]</scope>
</reference>
<reference key="3">
    <citation type="journal article" date="2010" name="Cell">
        <title>A tissue-specific atlas of mouse protein phosphorylation and expression.</title>
        <authorList>
            <person name="Huttlin E.L."/>
            <person name="Jedrychowski M.P."/>
            <person name="Elias J.E."/>
            <person name="Goswami T."/>
            <person name="Rad R."/>
            <person name="Beausoleil S.A."/>
            <person name="Villen J."/>
            <person name="Haas W."/>
            <person name="Sowa M.E."/>
            <person name="Gygi S.P."/>
        </authorList>
    </citation>
    <scope>IDENTIFICATION BY MASS SPECTROMETRY [LARGE SCALE ANALYSIS]</scope>
    <source>
        <tissue>Liver</tissue>
    </source>
</reference>
<organism>
    <name type="scientific">Mus musculus</name>
    <name type="common">Mouse</name>
    <dbReference type="NCBI Taxonomy" id="10090"/>
    <lineage>
        <taxon>Eukaryota</taxon>
        <taxon>Metazoa</taxon>
        <taxon>Chordata</taxon>
        <taxon>Craniata</taxon>
        <taxon>Vertebrata</taxon>
        <taxon>Euteleostomi</taxon>
        <taxon>Mammalia</taxon>
        <taxon>Eutheria</taxon>
        <taxon>Euarchontoglires</taxon>
        <taxon>Glires</taxon>
        <taxon>Rodentia</taxon>
        <taxon>Myomorpha</taxon>
        <taxon>Muroidea</taxon>
        <taxon>Muridae</taxon>
        <taxon>Murinae</taxon>
        <taxon>Mus</taxon>
        <taxon>Mus</taxon>
    </lineage>
</organism>
<feature type="chain" id="PRO_0000315241" description="2-oxo-4-hydroxy-4-carboxy-5-ureidoimidazoline decarboxylase">
    <location>
        <begin position="1"/>
        <end position="178"/>
    </location>
</feature>
<feature type="active site" description="Proton donor" evidence="1">
    <location>
        <position position="67"/>
    </location>
</feature>
<feature type="binding site" evidence="1">
    <location>
        <position position="68"/>
    </location>
    <ligand>
        <name>substrate</name>
    </ligand>
</feature>
<feature type="binding site" evidence="1">
    <location>
        <begin position="84"/>
        <end position="88"/>
    </location>
    <ligand>
        <name>substrate</name>
    </ligand>
</feature>
<feature type="binding site" evidence="1">
    <location>
        <begin position="119"/>
        <end position="123"/>
    </location>
    <ligand>
        <name>substrate</name>
    </ligand>
</feature>
<keyword id="KW-0210">Decarboxylase</keyword>
<keyword id="KW-0456">Lyase</keyword>
<keyword id="KW-0576">Peroxisome</keyword>
<keyword id="KW-0659">Purine metabolism</keyword>
<keyword id="KW-1185">Reference proteome</keyword>
<accession>Q283N4</accession>
<gene>
    <name type="primary">Urad</name>
    <name type="synonym">Prhoxnb</name>
</gene>
<proteinExistence type="evidence at protein level"/>